<reference key="1">
    <citation type="journal article" date="2001" name="Proc. Natl. Acad. Sci. U.S.A.">
        <title>Analysis of the chromosome sequence of the legume symbiont Sinorhizobium meliloti strain 1021.</title>
        <authorList>
            <person name="Capela D."/>
            <person name="Barloy-Hubler F."/>
            <person name="Gouzy J."/>
            <person name="Bothe G."/>
            <person name="Ampe F."/>
            <person name="Batut J."/>
            <person name="Boistard P."/>
            <person name="Becker A."/>
            <person name="Boutry M."/>
            <person name="Cadieu E."/>
            <person name="Dreano S."/>
            <person name="Gloux S."/>
            <person name="Godrie T."/>
            <person name="Goffeau A."/>
            <person name="Kahn D."/>
            <person name="Kiss E."/>
            <person name="Lelaure V."/>
            <person name="Masuy D."/>
            <person name="Pohl T."/>
            <person name="Portetelle D."/>
            <person name="Puehler A."/>
            <person name="Purnelle B."/>
            <person name="Ramsperger U."/>
            <person name="Renard C."/>
            <person name="Thebault P."/>
            <person name="Vandenbol M."/>
            <person name="Weidner S."/>
            <person name="Galibert F."/>
        </authorList>
    </citation>
    <scope>NUCLEOTIDE SEQUENCE [LARGE SCALE GENOMIC DNA]</scope>
    <source>
        <strain>1021</strain>
    </source>
</reference>
<reference key="2">
    <citation type="journal article" date="2001" name="Science">
        <title>The composite genome of the legume symbiont Sinorhizobium meliloti.</title>
        <authorList>
            <person name="Galibert F."/>
            <person name="Finan T.M."/>
            <person name="Long S.R."/>
            <person name="Puehler A."/>
            <person name="Abola P."/>
            <person name="Ampe F."/>
            <person name="Barloy-Hubler F."/>
            <person name="Barnett M.J."/>
            <person name="Becker A."/>
            <person name="Boistard P."/>
            <person name="Bothe G."/>
            <person name="Boutry M."/>
            <person name="Bowser L."/>
            <person name="Buhrmester J."/>
            <person name="Cadieu E."/>
            <person name="Capela D."/>
            <person name="Chain P."/>
            <person name="Cowie A."/>
            <person name="Davis R.W."/>
            <person name="Dreano S."/>
            <person name="Federspiel N.A."/>
            <person name="Fisher R.F."/>
            <person name="Gloux S."/>
            <person name="Godrie T."/>
            <person name="Goffeau A."/>
            <person name="Golding B."/>
            <person name="Gouzy J."/>
            <person name="Gurjal M."/>
            <person name="Hernandez-Lucas I."/>
            <person name="Hong A."/>
            <person name="Huizar L."/>
            <person name="Hyman R.W."/>
            <person name="Jones T."/>
            <person name="Kahn D."/>
            <person name="Kahn M.L."/>
            <person name="Kalman S."/>
            <person name="Keating D.H."/>
            <person name="Kiss E."/>
            <person name="Komp C."/>
            <person name="Lelaure V."/>
            <person name="Masuy D."/>
            <person name="Palm C."/>
            <person name="Peck M.C."/>
            <person name="Pohl T.M."/>
            <person name="Portetelle D."/>
            <person name="Purnelle B."/>
            <person name="Ramsperger U."/>
            <person name="Surzycki R."/>
            <person name="Thebault P."/>
            <person name="Vandenbol M."/>
            <person name="Vorhoelter F.J."/>
            <person name="Weidner S."/>
            <person name="Wells D.H."/>
            <person name="Wong K."/>
            <person name="Yeh K.-C."/>
            <person name="Batut J."/>
        </authorList>
    </citation>
    <scope>NUCLEOTIDE SEQUENCE [LARGE SCALE GENOMIC DNA]</scope>
    <source>
        <strain>1021</strain>
    </source>
</reference>
<keyword id="KW-0028">Amino-acid biosynthesis</keyword>
<keyword id="KW-0963">Cytoplasm</keyword>
<keyword id="KW-0315">Glutamine amidotransferase</keyword>
<keyword id="KW-0368">Histidine biosynthesis</keyword>
<keyword id="KW-0378">Hydrolase</keyword>
<keyword id="KW-0456">Lyase</keyword>
<keyword id="KW-1185">Reference proteome</keyword>
<comment type="function">
    <text evidence="1">IGPS catalyzes the conversion of PRFAR and glutamine to IGP, AICAR and glutamate. The HisH subunit catalyzes the hydrolysis of glutamine to glutamate and ammonia as part of the synthesis of IGP and AICAR. The resulting ammonia molecule is channeled to the active site of HisF.</text>
</comment>
<comment type="catalytic activity">
    <reaction evidence="1">
        <text>5-[(5-phospho-1-deoxy-D-ribulos-1-ylimino)methylamino]-1-(5-phospho-beta-D-ribosyl)imidazole-4-carboxamide + L-glutamine = D-erythro-1-(imidazol-4-yl)glycerol 3-phosphate + 5-amino-1-(5-phospho-beta-D-ribosyl)imidazole-4-carboxamide + L-glutamate + H(+)</text>
        <dbReference type="Rhea" id="RHEA:24793"/>
        <dbReference type="ChEBI" id="CHEBI:15378"/>
        <dbReference type="ChEBI" id="CHEBI:29985"/>
        <dbReference type="ChEBI" id="CHEBI:58278"/>
        <dbReference type="ChEBI" id="CHEBI:58359"/>
        <dbReference type="ChEBI" id="CHEBI:58475"/>
        <dbReference type="ChEBI" id="CHEBI:58525"/>
        <dbReference type="EC" id="4.3.2.10"/>
    </reaction>
</comment>
<comment type="catalytic activity">
    <reaction evidence="1">
        <text>L-glutamine + H2O = L-glutamate + NH4(+)</text>
        <dbReference type="Rhea" id="RHEA:15889"/>
        <dbReference type="ChEBI" id="CHEBI:15377"/>
        <dbReference type="ChEBI" id="CHEBI:28938"/>
        <dbReference type="ChEBI" id="CHEBI:29985"/>
        <dbReference type="ChEBI" id="CHEBI:58359"/>
        <dbReference type="EC" id="3.5.1.2"/>
    </reaction>
</comment>
<comment type="pathway">
    <text evidence="1">Amino-acid biosynthesis; L-histidine biosynthesis; L-histidine from 5-phospho-alpha-D-ribose 1-diphosphate: step 5/9.</text>
</comment>
<comment type="subunit">
    <text evidence="1">Heterodimer of HisH and HisF.</text>
</comment>
<comment type="subcellular location">
    <subcellularLocation>
        <location evidence="1">Cytoplasm</location>
    </subcellularLocation>
</comment>
<evidence type="ECO:0000255" key="1">
    <source>
        <dbReference type="HAMAP-Rule" id="MF_00278"/>
    </source>
</evidence>
<dbReference type="EC" id="4.3.2.10" evidence="1"/>
<dbReference type="EC" id="3.5.1.2" evidence="1"/>
<dbReference type="EMBL" id="AL591688">
    <property type="protein sequence ID" value="CAC41440.1"/>
    <property type="molecule type" value="Genomic_DNA"/>
</dbReference>
<dbReference type="RefSeq" id="NP_384159.1">
    <property type="nucleotide sequence ID" value="NC_003047.1"/>
</dbReference>
<dbReference type="RefSeq" id="WP_010968319.1">
    <property type="nucleotide sequence ID" value="NC_003047.1"/>
</dbReference>
<dbReference type="SMR" id="Q92TB1"/>
<dbReference type="EnsemblBacteria" id="CAC41440">
    <property type="protein sequence ID" value="CAC41440"/>
    <property type="gene ID" value="SMc02572"/>
</dbReference>
<dbReference type="KEGG" id="sme:SMc02572"/>
<dbReference type="PATRIC" id="fig|266834.11.peg.1407"/>
<dbReference type="eggNOG" id="COG0118">
    <property type="taxonomic scope" value="Bacteria"/>
</dbReference>
<dbReference type="HOGENOM" id="CLU_071837_2_0_5"/>
<dbReference type="OrthoDB" id="9807137at2"/>
<dbReference type="UniPathway" id="UPA00031">
    <property type="reaction ID" value="UER00010"/>
</dbReference>
<dbReference type="Proteomes" id="UP000001976">
    <property type="component" value="Chromosome"/>
</dbReference>
<dbReference type="GO" id="GO:0005737">
    <property type="term" value="C:cytoplasm"/>
    <property type="evidence" value="ECO:0007669"/>
    <property type="project" value="UniProtKB-SubCell"/>
</dbReference>
<dbReference type="GO" id="GO:0004359">
    <property type="term" value="F:glutaminase activity"/>
    <property type="evidence" value="ECO:0007669"/>
    <property type="project" value="UniProtKB-EC"/>
</dbReference>
<dbReference type="GO" id="GO:0000107">
    <property type="term" value="F:imidazoleglycerol-phosphate synthase activity"/>
    <property type="evidence" value="ECO:0007669"/>
    <property type="project" value="UniProtKB-UniRule"/>
</dbReference>
<dbReference type="GO" id="GO:0016829">
    <property type="term" value="F:lyase activity"/>
    <property type="evidence" value="ECO:0007669"/>
    <property type="project" value="UniProtKB-KW"/>
</dbReference>
<dbReference type="GO" id="GO:0000105">
    <property type="term" value="P:L-histidine biosynthetic process"/>
    <property type="evidence" value="ECO:0007669"/>
    <property type="project" value="UniProtKB-UniRule"/>
</dbReference>
<dbReference type="CDD" id="cd01748">
    <property type="entry name" value="GATase1_IGP_Synthase"/>
    <property type="match status" value="1"/>
</dbReference>
<dbReference type="Gene3D" id="3.40.50.880">
    <property type="match status" value="1"/>
</dbReference>
<dbReference type="HAMAP" id="MF_00278">
    <property type="entry name" value="HisH"/>
    <property type="match status" value="1"/>
</dbReference>
<dbReference type="InterPro" id="IPR029062">
    <property type="entry name" value="Class_I_gatase-like"/>
</dbReference>
<dbReference type="InterPro" id="IPR017926">
    <property type="entry name" value="GATASE"/>
</dbReference>
<dbReference type="InterPro" id="IPR010139">
    <property type="entry name" value="Imidazole-glycPsynth_HisH"/>
</dbReference>
<dbReference type="NCBIfam" id="TIGR01855">
    <property type="entry name" value="IMP_synth_hisH"/>
    <property type="match status" value="1"/>
</dbReference>
<dbReference type="PANTHER" id="PTHR42701">
    <property type="entry name" value="IMIDAZOLE GLYCEROL PHOSPHATE SYNTHASE SUBUNIT HISH"/>
    <property type="match status" value="1"/>
</dbReference>
<dbReference type="PANTHER" id="PTHR42701:SF1">
    <property type="entry name" value="IMIDAZOLE GLYCEROL PHOSPHATE SYNTHASE SUBUNIT HISH"/>
    <property type="match status" value="1"/>
</dbReference>
<dbReference type="Pfam" id="PF00117">
    <property type="entry name" value="GATase"/>
    <property type="match status" value="1"/>
</dbReference>
<dbReference type="PIRSF" id="PIRSF000495">
    <property type="entry name" value="Amidotransf_hisH"/>
    <property type="match status" value="1"/>
</dbReference>
<dbReference type="SUPFAM" id="SSF52317">
    <property type="entry name" value="Class I glutamine amidotransferase-like"/>
    <property type="match status" value="1"/>
</dbReference>
<dbReference type="PROSITE" id="PS51273">
    <property type="entry name" value="GATASE_TYPE_1"/>
    <property type="match status" value="1"/>
</dbReference>
<organism>
    <name type="scientific">Rhizobium meliloti (strain 1021)</name>
    <name type="common">Ensifer meliloti</name>
    <name type="synonym">Sinorhizobium meliloti</name>
    <dbReference type="NCBI Taxonomy" id="266834"/>
    <lineage>
        <taxon>Bacteria</taxon>
        <taxon>Pseudomonadati</taxon>
        <taxon>Pseudomonadota</taxon>
        <taxon>Alphaproteobacteria</taxon>
        <taxon>Hyphomicrobiales</taxon>
        <taxon>Rhizobiaceae</taxon>
        <taxon>Sinorhizobium/Ensifer group</taxon>
        <taxon>Sinorhizobium</taxon>
    </lineage>
</organism>
<gene>
    <name evidence="1" type="primary">hisH</name>
    <name type="ordered locus">R00053</name>
    <name type="ORF">SMc02572</name>
</gene>
<accession>Q92TB1</accession>
<sequence>MRVAIIDYGSGNLRSATKAFERAAREAGIAAEIDLTDRPERVATADRIVLPGVGAYADCRRGLAVVEGMEEALTEAVEKTGRPFFGICVGMQLMSSRGLEKTVTKGFGWIAGDVVGMTPEDPSLKIPQIGWNTLDLKRPHPLFDGIPTGENGLHAYFVHSYHLAAERAEDVVAEAGYGGPVTAFVARDNKAGSQFHPEKSQALGLALISNFLRWKP</sequence>
<name>HIS5_RHIME</name>
<feature type="chain" id="PRO_0000152414" description="Imidazole glycerol phosphate synthase subunit HisH">
    <location>
        <begin position="1"/>
        <end position="216"/>
    </location>
</feature>
<feature type="domain" description="Glutamine amidotransferase type-1" evidence="1">
    <location>
        <begin position="2"/>
        <end position="216"/>
    </location>
</feature>
<feature type="active site" description="Nucleophile" evidence="1">
    <location>
        <position position="88"/>
    </location>
</feature>
<feature type="active site" evidence="1">
    <location>
        <position position="196"/>
    </location>
</feature>
<feature type="active site" evidence="1">
    <location>
        <position position="198"/>
    </location>
</feature>
<proteinExistence type="inferred from homology"/>
<protein>
    <recommendedName>
        <fullName evidence="1">Imidazole glycerol phosphate synthase subunit HisH</fullName>
        <ecNumber evidence="1">4.3.2.10</ecNumber>
    </recommendedName>
    <alternativeName>
        <fullName evidence="1">IGP synthase glutaminase subunit</fullName>
        <ecNumber evidence="1">3.5.1.2</ecNumber>
    </alternativeName>
    <alternativeName>
        <fullName evidence="1">IGP synthase subunit HisH</fullName>
    </alternativeName>
    <alternativeName>
        <fullName evidence="1">ImGP synthase subunit HisH</fullName>
        <shortName evidence="1">IGPS subunit HisH</shortName>
    </alternativeName>
</protein>